<reference key="1">
    <citation type="journal article" date="2005" name="J. Infect. Dis.">
        <title>Genome sequence of a serotype M28 strain of group A Streptococcus: potential new insights into puerperal sepsis and bacterial disease specificity.</title>
        <authorList>
            <person name="Green N.M."/>
            <person name="Zhang S."/>
            <person name="Porcella S.F."/>
            <person name="Nagiec M.J."/>
            <person name="Barbian K.D."/>
            <person name="Beres S.B."/>
            <person name="Lefebvre R.B."/>
            <person name="Musser J.M."/>
        </authorList>
    </citation>
    <scope>NUCLEOTIDE SEQUENCE [LARGE SCALE GENOMIC DNA]</scope>
    <source>
        <strain>MGAS6180</strain>
    </source>
</reference>
<organism>
    <name type="scientific">Streptococcus pyogenes serotype M28 (strain MGAS6180)</name>
    <dbReference type="NCBI Taxonomy" id="319701"/>
    <lineage>
        <taxon>Bacteria</taxon>
        <taxon>Bacillati</taxon>
        <taxon>Bacillota</taxon>
        <taxon>Bacilli</taxon>
        <taxon>Lactobacillales</taxon>
        <taxon>Streptococcaceae</taxon>
        <taxon>Streptococcus</taxon>
    </lineage>
</organism>
<name>CLPX_STRPM</name>
<protein>
    <recommendedName>
        <fullName evidence="1">ATP-dependent Clp protease ATP-binding subunit ClpX</fullName>
    </recommendedName>
</protein>
<accession>Q48U22</accession>
<sequence length="409" mass="44991">MAGSRTNDIKVYCSFCGKSQDDVKKIIAGNNVFICNECVALSQEIIKEELAEEVLADLTEVPKPKELLDVLNQYVVGQDRAKRALSVAVYNHYKRVSFTESRDDDDVDLQKSNILMIGPTGSGKTFLAQTLAKSLNVPFAIADATSLTEAGYVGEDVENILLKLIQAADYNVERAERGIIYVDEIDKIAKKGENVSITRDVSGEGVQQALLKIIEGTVASVPPQGGRKHPNQEMIQIDTKNILFIVGGAFDGIEEIVKQRLGEKVIGFGQNSRKIDDNASYMQEIISEDIQKFGLIPEFIGRLPVVAALEQLNTSDLIQILTEPRNALVKQYQALLSYDGVELAFDKEALEAIANKAIERKTGARGLRSIIEETMLDIMFEIPSQEDVTKVRITKAAVEGKSKPVLETA</sequence>
<evidence type="ECO:0000255" key="1">
    <source>
        <dbReference type="HAMAP-Rule" id="MF_00175"/>
    </source>
</evidence>
<evidence type="ECO:0000255" key="2">
    <source>
        <dbReference type="PROSITE-ProRule" id="PRU01250"/>
    </source>
</evidence>
<gene>
    <name evidence="1" type="primary">clpX</name>
    <name type="ordered locus">M28_Spy0671</name>
</gene>
<feature type="chain" id="PRO_1000024683" description="ATP-dependent Clp protease ATP-binding subunit ClpX">
    <location>
        <begin position="1"/>
        <end position="409"/>
    </location>
</feature>
<feature type="domain" description="ClpX-type ZB" evidence="2">
    <location>
        <begin position="1"/>
        <end position="54"/>
    </location>
</feature>
<feature type="binding site" evidence="2">
    <location>
        <position position="13"/>
    </location>
    <ligand>
        <name>Zn(2+)</name>
        <dbReference type="ChEBI" id="CHEBI:29105"/>
    </ligand>
</feature>
<feature type="binding site" evidence="2">
    <location>
        <position position="16"/>
    </location>
    <ligand>
        <name>Zn(2+)</name>
        <dbReference type="ChEBI" id="CHEBI:29105"/>
    </ligand>
</feature>
<feature type="binding site" evidence="2">
    <location>
        <position position="35"/>
    </location>
    <ligand>
        <name>Zn(2+)</name>
        <dbReference type="ChEBI" id="CHEBI:29105"/>
    </ligand>
</feature>
<feature type="binding site" evidence="2">
    <location>
        <position position="38"/>
    </location>
    <ligand>
        <name>Zn(2+)</name>
        <dbReference type="ChEBI" id="CHEBI:29105"/>
    </ligand>
</feature>
<feature type="binding site" evidence="1">
    <location>
        <begin position="119"/>
        <end position="126"/>
    </location>
    <ligand>
        <name>ATP</name>
        <dbReference type="ChEBI" id="CHEBI:30616"/>
    </ligand>
</feature>
<comment type="function">
    <text evidence="1">ATP-dependent specificity component of the Clp protease. It directs the protease to specific substrates. Can perform chaperone functions in the absence of ClpP.</text>
</comment>
<comment type="subunit">
    <text evidence="1">Component of the ClpX-ClpP complex. Forms a hexameric ring that, in the presence of ATP, binds to fourteen ClpP subunits assembled into a disk-like structure with a central cavity, resembling the structure of eukaryotic proteasomes.</text>
</comment>
<comment type="similarity">
    <text evidence="1">Belongs to the ClpX chaperone family.</text>
</comment>
<dbReference type="EMBL" id="CP000056">
    <property type="protein sequence ID" value="AAX71784.1"/>
    <property type="molecule type" value="Genomic_DNA"/>
</dbReference>
<dbReference type="RefSeq" id="WP_002984948.1">
    <property type="nucleotide sequence ID" value="NC_007296.2"/>
</dbReference>
<dbReference type="SMR" id="Q48U22"/>
<dbReference type="GeneID" id="69901010"/>
<dbReference type="KEGG" id="spb:M28_Spy0671"/>
<dbReference type="HOGENOM" id="CLU_014218_8_2_9"/>
<dbReference type="GO" id="GO:0009376">
    <property type="term" value="C:HslUV protease complex"/>
    <property type="evidence" value="ECO:0007669"/>
    <property type="project" value="TreeGrafter"/>
</dbReference>
<dbReference type="GO" id="GO:0005524">
    <property type="term" value="F:ATP binding"/>
    <property type="evidence" value="ECO:0007669"/>
    <property type="project" value="UniProtKB-UniRule"/>
</dbReference>
<dbReference type="GO" id="GO:0016887">
    <property type="term" value="F:ATP hydrolysis activity"/>
    <property type="evidence" value="ECO:0007669"/>
    <property type="project" value="InterPro"/>
</dbReference>
<dbReference type="GO" id="GO:0140662">
    <property type="term" value="F:ATP-dependent protein folding chaperone"/>
    <property type="evidence" value="ECO:0007669"/>
    <property type="project" value="InterPro"/>
</dbReference>
<dbReference type="GO" id="GO:0046983">
    <property type="term" value="F:protein dimerization activity"/>
    <property type="evidence" value="ECO:0007669"/>
    <property type="project" value="InterPro"/>
</dbReference>
<dbReference type="GO" id="GO:0051082">
    <property type="term" value="F:unfolded protein binding"/>
    <property type="evidence" value="ECO:0007669"/>
    <property type="project" value="UniProtKB-UniRule"/>
</dbReference>
<dbReference type="GO" id="GO:0008270">
    <property type="term" value="F:zinc ion binding"/>
    <property type="evidence" value="ECO:0007669"/>
    <property type="project" value="InterPro"/>
</dbReference>
<dbReference type="GO" id="GO:0051301">
    <property type="term" value="P:cell division"/>
    <property type="evidence" value="ECO:0007669"/>
    <property type="project" value="TreeGrafter"/>
</dbReference>
<dbReference type="GO" id="GO:0051603">
    <property type="term" value="P:proteolysis involved in protein catabolic process"/>
    <property type="evidence" value="ECO:0007669"/>
    <property type="project" value="TreeGrafter"/>
</dbReference>
<dbReference type="CDD" id="cd19497">
    <property type="entry name" value="RecA-like_ClpX"/>
    <property type="match status" value="1"/>
</dbReference>
<dbReference type="FunFam" id="1.10.8.60:FF:000002">
    <property type="entry name" value="ATP-dependent Clp protease ATP-binding subunit ClpX"/>
    <property type="match status" value="1"/>
</dbReference>
<dbReference type="FunFam" id="3.40.50.300:FF:000005">
    <property type="entry name" value="ATP-dependent Clp protease ATP-binding subunit ClpX"/>
    <property type="match status" value="1"/>
</dbReference>
<dbReference type="Gene3D" id="1.10.8.60">
    <property type="match status" value="1"/>
</dbReference>
<dbReference type="Gene3D" id="6.20.220.10">
    <property type="entry name" value="ClpX chaperone, C4-type zinc finger domain"/>
    <property type="match status" value="1"/>
</dbReference>
<dbReference type="Gene3D" id="3.40.50.300">
    <property type="entry name" value="P-loop containing nucleotide triphosphate hydrolases"/>
    <property type="match status" value="1"/>
</dbReference>
<dbReference type="HAMAP" id="MF_00175">
    <property type="entry name" value="ClpX"/>
    <property type="match status" value="1"/>
</dbReference>
<dbReference type="InterPro" id="IPR003593">
    <property type="entry name" value="AAA+_ATPase"/>
</dbReference>
<dbReference type="InterPro" id="IPR050052">
    <property type="entry name" value="ATP-dep_Clp_protease_ClpX"/>
</dbReference>
<dbReference type="InterPro" id="IPR003959">
    <property type="entry name" value="ATPase_AAA_core"/>
</dbReference>
<dbReference type="InterPro" id="IPR019489">
    <property type="entry name" value="Clp_ATPase_C"/>
</dbReference>
<dbReference type="InterPro" id="IPR004487">
    <property type="entry name" value="Clp_protease_ATP-bd_su_ClpX"/>
</dbReference>
<dbReference type="InterPro" id="IPR046425">
    <property type="entry name" value="ClpX_bact"/>
</dbReference>
<dbReference type="InterPro" id="IPR027417">
    <property type="entry name" value="P-loop_NTPase"/>
</dbReference>
<dbReference type="InterPro" id="IPR010603">
    <property type="entry name" value="Znf_CppX_C4"/>
</dbReference>
<dbReference type="InterPro" id="IPR038366">
    <property type="entry name" value="Znf_CppX_C4_sf"/>
</dbReference>
<dbReference type="NCBIfam" id="TIGR00382">
    <property type="entry name" value="clpX"/>
    <property type="match status" value="1"/>
</dbReference>
<dbReference type="NCBIfam" id="NF003745">
    <property type="entry name" value="PRK05342.1"/>
    <property type="match status" value="1"/>
</dbReference>
<dbReference type="PANTHER" id="PTHR48102:SF7">
    <property type="entry name" value="ATP-DEPENDENT CLP PROTEASE ATP-BINDING SUBUNIT CLPX-LIKE, MITOCHONDRIAL"/>
    <property type="match status" value="1"/>
</dbReference>
<dbReference type="PANTHER" id="PTHR48102">
    <property type="entry name" value="ATP-DEPENDENT CLP PROTEASE ATP-BINDING SUBUNIT CLPX-LIKE, MITOCHONDRIAL-RELATED"/>
    <property type="match status" value="1"/>
</dbReference>
<dbReference type="Pfam" id="PF07724">
    <property type="entry name" value="AAA_2"/>
    <property type="match status" value="1"/>
</dbReference>
<dbReference type="Pfam" id="PF10431">
    <property type="entry name" value="ClpB_D2-small"/>
    <property type="match status" value="1"/>
</dbReference>
<dbReference type="Pfam" id="PF06689">
    <property type="entry name" value="zf-C4_ClpX"/>
    <property type="match status" value="1"/>
</dbReference>
<dbReference type="SMART" id="SM00382">
    <property type="entry name" value="AAA"/>
    <property type="match status" value="1"/>
</dbReference>
<dbReference type="SMART" id="SM01086">
    <property type="entry name" value="ClpB_D2-small"/>
    <property type="match status" value="1"/>
</dbReference>
<dbReference type="SMART" id="SM00994">
    <property type="entry name" value="zf-C4_ClpX"/>
    <property type="match status" value="1"/>
</dbReference>
<dbReference type="SUPFAM" id="SSF57716">
    <property type="entry name" value="Glucocorticoid receptor-like (DNA-binding domain)"/>
    <property type="match status" value="1"/>
</dbReference>
<dbReference type="SUPFAM" id="SSF52540">
    <property type="entry name" value="P-loop containing nucleoside triphosphate hydrolases"/>
    <property type="match status" value="1"/>
</dbReference>
<dbReference type="PROSITE" id="PS51902">
    <property type="entry name" value="CLPX_ZB"/>
    <property type="match status" value="1"/>
</dbReference>
<keyword id="KW-0067">ATP-binding</keyword>
<keyword id="KW-0143">Chaperone</keyword>
<keyword id="KW-0479">Metal-binding</keyword>
<keyword id="KW-0547">Nucleotide-binding</keyword>
<keyword id="KW-0862">Zinc</keyword>
<proteinExistence type="inferred from homology"/>